<proteinExistence type="inferred from homology"/>
<gene>
    <name evidence="1" type="primary">rpsR1</name>
    <name type="ordered locus">Reut_A2004</name>
</gene>
<reference key="1">
    <citation type="journal article" date="2010" name="PLoS ONE">
        <title>The complete multipartite genome sequence of Cupriavidus necator JMP134, a versatile pollutant degrader.</title>
        <authorList>
            <person name="Lykidis A."/>
            <person name="Perez-Pantoja D."/>
            <person name="Ledger T."/>
            <person name="Mavromatis K."/>
            <person name="Anderson I.J."/>
            <person name="Ivanova N.N."/>
            <person name="Hooper S.D."/>
            <person name="Lapidus A."/>
            <person name="Lucas S."/>
            <person name="Gonzalez B."/>
            <person name="Kyrpides N.C."/>
        </authorList>
    </citation>
    <scope>NUCLEOTIDE SEQUENCE [LARGE SCALE GENOMIC DNA]</scope>
    <source>
        <strain>JMP134 / LMG 1197</strain>
    </source>
</reference>
<protein>
    <recommendedName>
        <fullName evidence="1">Small ribosomal subunit protein bS18A</fullName>
    </recommendedName>
    <alternativeName>
        <fullName evidence="2">30S ribosomal protein S18 1</fullName>
    </alternativeName>
</protein>
<name>RS181_CUPPJ</name>
<sequence>MAFIKRDNKNKKRFQQQNPLFKRKRFCRFTVAGVEQIDYKDLDTLKDFIGDNGKITPARLTGTKAHYQRQLDTAIKRARFLALMPYTDLHKN</sequence>
<comment type="function">
    <text evidence="1">Binds as a heterodimer with protein bS6 to the central domain of the 16S rRNA, where it helps stabilize the platform of the 30S subunit.</text>
</comment>
<comment type="subunit">
    <text evidence="1">Part of the 30S ribosomal subunit. Forms a tight heterodimer with protein bS6.</text>
</comment>
<comment type="similarity">
    <text evidence="1">Belongs to the bacterial ribosomal protein bS18 family.</text>
</comment>
<evidence type="ECO:0000255" key="1">
    <source>
        <dbReference type="HAMAP-Rule" id="MF_00270"/>
    </source>
</evidence>
<evidence type="ECO:0000305" key="2"/>
<accession>Q46ZR5</accession>
<keyword id="KW-0687">Ribonucleoprotein</keyword>
<keyword id="KW-0689">Ribosomal protein</keyword>
<keyword id="KW-0694">RNA-binding</keyword>
<keyword id="KW-0699">rRNA-binding</keyword>
<feature type="chain" id="PRO_0000345529" description="Small ribosomal subunit protein bS18A">
    <location>
        <begin position="1"/>
        <end position="92"/>
    </location>
</feature>
<organism>
    <name type="scientific">Cupriavidus pinatubonensis (strain JMP 134 / LMG 1197)</name>
    <name type="common">Cupriavidus necator (strain JMP 134)</name>
    <dbReference type="NCBI Taxonomy" id="264198"/>
    <lineage>
        <taxon>Bacteria</taxon>
        <taxon>Pseudomonadati</taxon>
        <taxon>Pseudomonadota</taxon>
        <taxon>Betaproteobacteria</taxon>
        <taxon>Burkholderiales</taxon>
        <taxon>Burkholderiaceae</taxon>
        <taxon>Cupriavidus</taxon>
    </lineage>
</organism>
<dbReference type="EMBL" id="CP000090">
    <property type="protein sequence ID" value="AAZ61368.1"/>
    <property type="molecule type" value="Genomic_DNA"/>
</dbReference>
<dbReference type="SMR" id="Q46ZR5"/>
<dbReference type="STRING" id="264198.Reut_A2004"/>
<dbReference type="KEGG" id="reu:Reut_A2004"/>
<dbReference type="eggNOG" id="COG0238">
    <property type="taxonomic scope" value="Bacteria"/>
</dbReference>
<dbReference type="HOGENOM" id="CLU_148710_0_3_4"/>
<dbReference type="OrthoDB" id="9812008at2"/>
<dbReference type="GO" id="GO:0022627">
    <property type="term" value="C:cytosolic small ribosomal subunit"/>
    <property type="evidence" value="ECO:0007669"/>
    <property type="project" value="TreeGrafter"/>
</dbReference>
<dbReference type="GO" id="GO:0070181">
    <property type="term" value="F:small ribosomal subunit rRNA binding"/>
    <property type="evidence" value="ECO:0007669"/>
    <property type="project" value="TreeGrafter"/>
</dbReference>
<dbReference type="GO" id="GO:0003735">
    <property type="term" value="F:structural constituent of ribosome"/>
    <property type="evidence" value="ECO:0007669"/>
    <property type="project" value="InterPro"/>
</dbReference>
<dbReference type="GO" id="GO:0006412">
    <property type="term" value="P:translation"/>
    <property type="evidence" value="ECO:0007669"/>
    <property type="project" value="UniProtKB-UniRule"/>
</dbReference>
<dbReference type="Gene3D" id="4.10.640.10">
    <property type="entry name" value="Ribosomal protein S18"/>
    <property type="match status" value="1"/>
</dbReference>
<dbReference type="HAMAP" id="MF_00270">
    <property type="entry name" value="Ribosomal_bS18"/>
    <property type="match status" value="1"/>
</dbReference>
<dbReference type="InterPro" id="IPR001648">
    <property type="entry name" value="Ribosomal_bS18"/>
</dbReference>
<dbReference type="InterPro" id="IPR018275">
    <property type="entry name" value="Ribosomal_bS18_CS"/>
</dbReference>
<dbReference type="InterPro" id="IPR036870">
    <property type="entry name" value="Ribosomal_bS18_sf"/>
</dbReference>
<dbReference type="NCBIfam" id="TIGR00165">
    <property type="entry name" value="S18"/>
    <property type="match status" value="1"/>
</dbReference>
<dbReference type="PANTHER" id="PTHR13479">
    <property type="entry name" value="30S RIBOSOMAL PROTEIN S18"/>
    <property type="match status" value="1"/>
</dbReference>
<dbReference type="PANTHER" id="PTHR13479:SF40">
    <property type="entry name" value="SMALL RIBOSOMAL SUBUNIT PROTEIN BS18M"/>
    <property type="match status" value="1"/>
</dbReference>
<dbReference type="Pfam" id="PF01084">
    <property type="entry name" value="Ribosomal_S18"/>
    <property type="match status" value="1"/>
</dbReference>
<dbReference type="PRINTS" id="PR00974">
    <property type="entry name" value="RIBOSOMALS18"/>
</dbReference>
<dbReference type="SUPFAM" id="SSF46911">
    <property type="entry name" value="Ribosomal protein S18"/>
    <property type="match status" value="1"/>
</dbReference>
<dbReference type="PROSITE" id="PS00057">
    <property type="entry name" value="RIBOSOMAL_S18"/>
    <property type="match status" value="1"/>
</dbReference>